<dbReference type="EC" id="4.6.1.12" evidence="1"/>
<dbReference type="EMBL" id="CP001138">
    <property type="protein sequence ID" value="ACH51436.1"/>
    <property type="molecule type" value="Genomic_DNA"/>
</dbReference>
<dbReference type="RefSeq" id="WP_001219244.1">
    <property type="nucleotide sequence ID" value="NC_011149.1"/>
</dbReference>
<dbReference type="SMR" id="B5F410"/>
<dbReference type="KEGG" id="sea:SeAg_B3054"/>
<dbReference type="HOGENOM" id="CLU_084630_2_0_6"/>
<dbReference type="UniPathway" id="UPA00056">
    <property type="reaction ID" value="UER00095"/>
</dbReference>
<dbReference type="Proteomes" id="UP000008819">
    <property type="component" value="Chromosome"/>
</dbReference>
<dbReference type="GO" id="GO:0008685">
    <property type="term" value="F:2-C-methyl-D-erythritol 2,4-cyclodiphosphate synthase activity"/>
    <property type="evidence" value="ECO:0007669"/>
    <property type="project" value="UniProtKB-UniRule"/>
</dbReference>
<dbReference type="GO" id="GO:0046872">
    <property type="term" value="F:metal ion binding"/>
    <property type="evidence" value="ECO:0007669"/>
    <property type="project" value="UniProtKB-KW"/>
</dbReference>
<dbReference type="GO" id="GO:0019288">
    <property type="term" value="P:isopentenyl diphosphate biosynthetic process, methylerythritol 4-phosphate pathway"/>
    <property type="evidence" value="ECO:0007669"/>
    <property type="project" value="UniProtKB-UniRule"/>
</dbReference>
<dbReference type="GO" id="GO:0016114">
    <property type="term" value="P:terpenoid biosynthetic process"/>
    <property type="evidence" value="ECO:0007669"/>
    <property type="project" value="InterPro"/>
</dbReference>
<dbReference type="CDD" id="cd00554">
    <property type="entry name" value="MECDP_synthase"/>
    <property type="match status" value="1"/>
</dbReference>
<dbReference type="FunFam" id="3.30.1330.50:FF:000001">
    <property type="entry name" value="2-C-methyl-D-erythritol 2,4-cyclodiphosphate synthase"/>
    <property type="match status" value="1"/>
</dbReference>
<dbReference type="Gene3D" id="3.30.1330.50">
    <property type="entry name" value="2-C-methyl-D-erythritol 2,4-cyclodiphosphate synthase"/>
    <property type="match status" value="1"/>
</dbReference>
<dbReference type="HAMAP" id="MF_00107">
    <property type="entry name" value="IspF"/>
    <property type="match status" value="1"/>
</dbReference>
<dbReference type="InterPro" id="IPR003526">
    <property type="entry name" value="MECDP_synthase"/>
</dbReference>
<dbReference type="InterPro" id="IPR020555">
    <property type="entry name" value="MECDP_synthase_CS"/>
</dbReference>
<dbReference type="InterPro" id="IPR036571">
    <property type="entry name" value="MECDP_synthase_sf"/>
</dbReference>
<dbReference type="NCBIfam" id="TIGR00151">
    <property type="entry name" value="ispF"/>
    <property type="match status" value="1"/>
</dbReference>
<dbReference type="PANTHER" id="PTHR43181">
    <property type="entry name" value="2-C-METHYL-D-ERYTHRITOL 2,4-CYCLODIPHOSPHATE SYNTHASE, CHLOROPLASTIC"/>
    <property type="match status" value="1"/>
</dbReference>
<dbReference type="PANTHER" id="PTHR43181:SF1">
    <property type="entry name" value="2-C-METHYL-D-ERYTHRITOL 2,4-CYCLODIPHOSPHATE SYNTHASE, CHLOROPLASTIC"/>
    <property type="match status" value="1"/>
</dbReference>
<dbReference type="Pfam" id="PF02542">
    <property type="entry name" value="YgbB"/>
    <property type="match status" value="1"/>
</dbReference>
<dbReference type="SUPFAM" id="SSF69765">
    <property type="entry name" value="IpsF-like"/>
    <property type="match status" value="1"/>
</dbReference>
<dbReference type="PROSITE" id="PS01350">
    <property type="entry name" value="ISPF"/>
    <property type="match status" value="1"/>
</dbReference>
<sequence length="159" mass="16886">MRIGHGFDVHAFGGEGPIIIGGVRIPYEKGLLAHSDGDVALHALTDALLGAAALGDIGKLFPDTDPAFKGADSRELLREAWRRIQAKGYTLGNVDVTIIAQAPKMLPHIPQMRVFIAEDLGCHMDDVNVKATTTEKLGFTGRGEGIACEAVALLMKAAK</sequence>
<protein>
    <recommendedName>
        <fullName evidence="1">2-C-methyl-D-erythritol 2,4-cyclodiphosphate synthase</fullName>
        <shortName evidence="1">MECDP-synthase</shortName>
        <shortName evidence="1">MECPP-synthase</shortName>
        <shortName evidence="1">MECPS</shortName>
        <ecNumber evidence="1">4.6.1.12</ecNumber>
    </recommendedName>
</protein>
<organism>
    <name type="scientific">Salmonella agona (strain SL483)</name>
    <dbReference type="NCBI Taxonomy" id="454166"/>
    <lineage>
        <taxon>Bacteria</taxon>
        <taxon>Pseudomonadati</taxon>
        <taxon>Pseudomonadota</taxon>
        <taxon>Gammaproteobacteria</taxon>
        <taxon>Enterobacterales</taxon>
        <taxon>Enterobacteriaceae</taxon>
        <taxon>Salmonella</taxon>
    </lineage>
</organism>
<accession>B5F410</accession>
<comment type="function">
    <text evidence="1">Involved in the biosynthesis of isopentenyl diphosphate (IPP) and dimethylallyl diphosphate (DMAPP), two major building blocks of isoprenoid compounds. Catalyzes the conversion of 4-diphosphocytidyl-2-C-methyl-D-erythritol 2-phosphate (CDP-ME2P) to 2-C-methyl-D-erythritol 2,4-cyclodiphosphate (ME-CPP) with a corresponding release of cytidine 5-monophosphate (CMP).</text>
</comment>
<comment type="catalytic activity">
    <reaction evidence="1">
        <text>4-CDP-2-C-methyl-D-erythritol 2-phosphate = 2-C-methyl-D-erythritol 2,4-cyclic diphosphate + CMP</text>
        <dbReference type="Rhea" id="RHEA:23864"/>
        <dbReference type="ChEBI" id="CHEBI:57919"/>
        <dbReference type="ChEBI" id="CHEBI:58483"/>
        <dbReference type="ChEBI" id="CHEBI:60377"/>
        <dbReference type="EC" id="4.6.1.12"/>
    </reaction>
</comment>
<comment type="cofactor">
    <cofactor evidence="1">
        <name>a divalent metal cation</name>
        <dbReference type="ChEBI" id="CHEBI:60240"/>
    </cofactor>
    <text evidence="1">Binds 1 divalent metal cation per subunit.</text>
</comment>
<comment type="pathway">
    <text evidence="1">Isoprenoid biosynthesis; isopentenyl diphosphate biosynthesis via DXP pathway; isopentenyl diphosphate from 1-deoxy-D-xylulose 5-phosphate: step 4/6.</text>
</comment>
<comment type="subunit">
    <text evidence="1">Homotrimer.</text>
</comment>
<comment type="similarity">
    <text evidence="1">Belongs to the IspF family.</text>
</comment>
<feature type="chain" id="PRO_1000094283" description="2-C-methyl-D-erythritol 2,4-cyclodiphosphate synthase">
    <location>
        <begin position="1"/>
        <end position="159"/>
    </location>
</feature>
<feature type="binding site" evidence="1">
    <location>
        <begin position="8"/>
        <end position="10"/>
    </location>
    <ligand>
        <name>4-CDP-2-C-methyl-D-erythritol 2-phosphate</name>
        <dbReference type="ChEBI" id="CHEBI:57919"/>
    </ligand>
</feature>
<feature type="binding site" evidence="1">
    <location>
        <position position="8"/>
    </location>
    <ligand>
        <name>a divalent metal cation</name>
        <dbReference type="ChEBI" id="CHEBI:60240"/>
    </ligand>
</feature>
<feature type="binding site" evidence="1">
    <location>
        <position position="10"/>
    </location>
    <ligand>
        <name>a divalent metal cation</name>
        <dbReference type="ChEBI" id="CHEBI:60240"/>
    </ligand>
</feature>
<feature type="binding site" evidence="1">
    <location>
        <begin position="34"/>
        <end position="35"/>
    </location>
    <ligand>
        <name>4-CDP-2-C-methyl-D-erythritol 2-phosphate</name>
        <dbReference type="ChEBI" id="CHEBI:57919"/>
    </ligand>
</feature>
<feature type="binding site" evidence="1">
    <location>
        <position position="42"/>
    </location>
    <ligand>
        <name>a divalent metal cation</name>
        <dbReference type="ChEBI" id="CHEBI:60240"/>
    </ligand>
</feature>
<feature type="binding site" evidence="1">
    <location>
        <begin position="56"/>
        <end position="58"/>
    </location>
    <ligand>
        <name>4-CDP-2-C-methyl-D-erythritol 2-phosphate</name>
        <dbReference type="ChEBI" id="CHEBI:57919"/>
    </ligand>
</feature>
<feature type="binding site" evidence="1">
    <location>
        <begin position="61"/>
        <end position="65"/>
    </location>
    <ligand>
        <name>4-CDP-2-C-methyl-D-erythritol 2-phosphate</name>
        <dbReference type="ChEBI" id="CHEBI:57919"/>
    </ligand>
</feature>
<feature type="binding site" evidence="1">
    <location>
        <begin position="100"/>
        <end position="106"/>
    </location>
    <ligand>
        <name>4-CDP-2-C-methyl-D-erythritol 2-phosphate</name>
        <dbReference type="ChEBI" id="CHEBI:57919"/>
    </ligand>
</feature>
<feature type="binding site" evidence="1">
    <location>
        <begin position="132"/>
        <end position="135"/>
    </location>
    <ligand>
        <name>4-CDP-2-C-methyl-D-erythritol 2-phosphate</name>
        <dbReference type="ChEBI" id="CHEBI:57919"/>
    </ligand>
</feature>
<feature type="binding site" evidence="1">
    <location>
        <position position="139"/>
    </location>
    <ligand>
        <name>4-CDP-2-C-methyl-D-erythritol 2-phosphate</name>
        <dbReference type="ChEBI" id="CHEBI:57919"/>
    </ligand>
</feature>
<feature type="binding site" evidence="1">
    <location>
        <position position="142"/>
    </location>
    <ligand>
        <name>4-CDP-2-C-methyl-D-erythritol 2-phosphate</name>
        <dbReference type="ChEBI" id="CHEBI:57919"/>
    </ligand>
</feature>
<feature type="site" description="Transition state stabilizer" evidence="1">
    <location>
        <position position="34"/>
    </location>
</feature>
<feature type="site" description="Transition state stabilizer" evidence="1">
    <location>
        <position position="133"/>
    </location>
</feature>
<proteinExistence type="inferred from homology"/>
<gene>
    <name evidence="1" type="primary">ispF</name>
    <name type="ordered locus">SeAg_B3054</name>
</gene>
<keyword id="KW-0414">Isoprene biosynthesis</keyword>
<keyword id="KW-0456">Lyase</keyword>
<keyword id="KW-0479">Metal-binding</keyword>
<evidence type="ECO:0000255" key="1">
    <source>
        <dbReference type="HAMAP-Rule" id="MF_00107"/>
    </source>
</evidence>
<reference key="1">
    <citation type="journal article" date="2011" name="J. Bacteriol.">
        <title>Comparative genomics of 28 Salmonella enterica isolates: evidence for CRISPR-mediated adaptive sublineage evolution.</title>
        <authorList>
            <person name="Fricke W.F."/>
            <person name="Mammel M.K."/>
            <person name="McDermott P.F."/>
            <person name="Tartera C."/>
            <person name="White D.G."/>
            <person name="Leclerc J.E."/>
            <person name="Ravel J."/>
            <person name="Cebula T.A."/>
        </authorList>
    </citation>
    <scope>NUCLEOTIDE SEQUENCE [LARGE SCALE GENOMIC DNA]</scope>
    <source>
        <strain>SL483</strain>
    </source>
</reference>
<name>ISPF_SALA4</name>